<keyword id="KW-0997">Cell inner membrane</keyword>
<keyword id="KW-1003">Cell membrane</keyword>
<keyword id="KW-0407">Ion channel</keyword>
<keyword id="KW-0406">Ion transport</keyword>
<keyword id="KW-0472">Membrane</keyword>
<keyword id="KW-0812">Transmembrane</keyword>
<keyword id="KW-1133">Transmembrane helix</keyword>
<keyword id="KW-0813">Transport</keyword>
<name>MSCL_DECAR</name>
<sequence>MGMIQEFKEFAVKGNAMDLAVGVIIGGAFGKIVDSIVGDLIMPLVSRVVGKLDFSNLFFVLGDNPNNLTALADLKKAGIAVFAYGSFLTILVNFIILAFIIFMMVKQMNRMRKEEPAAPAEAPATPEDVLLLREIRDSLKK</sequence>
<accession>Q47AR9</accession>
<gene>
    <name evidence="1" type="primary">mscL</name>
    <name type="ordered locus">Daro_3333</name>
</gene>
<protein>
    <recommendedName>
        <fullName evidence="1">Large-conductance mechanosensitive channel</fullName>
    </recommendedName>
</protein>
<organism>
    <name type="scientific">Dechloromonas aromatica (strain RCB)</name>
    <dbReference type="NCBI Taxonomy" id="159087"/>
    <lineage>
        <taxon>Bacteria</taxon>
        <taxon>Pseudomonadati</taxon>
        <taxon>Pseudomonadota</taxon>
        <taxon>Betaproteobacteria</taxon>
        <taxon>Rhodocyclales</taxon>
        <taxon>Azonexaceae</taxon>
        <taxon>Dechloromonas</taxon>
    </lineage>
</organism>
<reference key="1">
    <citation type="journal article" date="2009" name="BMC Genomics">
        <title>Metabolic analysis of the soil microbe Dechloromonas aromatica str. RCB: indications of a surprisingly complex life-style and cryptic anaerobic pathways for aromatic degradation.</title>
        <authorList>
            <person name="Salinero K.K."/>
            <person name="Keller K."/>
            <person name="Feil W.S."/>
            <person name="Feil H."/>
            <person name="Trong S."/>
            <person name="Di Bartolo G."/>
            <person name="Lapidus A."/>
        </authorList>
    </citation>
    <scope>NUCLEOTIDE SEQUENCE [LARGE SCALE GENOMIC DNA]</scope>
    <source>
        <strain>RCB</strain>
    </source>
</reference>
<dbReference type="EMBL" id="CP000089">
    <property type="protein sequence ID" value="AAZ48062.1"/>
    <property type="molecule type" value="Genomic_DNA"/>
</dbReference>
<dbReference type="SMR" id="Q47AR9"/>
<dbReference type="STRING" id="159087.Daro_3333"/>
<dbReference type="KEGG" id="dar:Daro_3333"/>
<dbReference type="eggNOG" id="COG1970">
    <property type="taxonomic scope" value="Bacteria"/>
</dbReference>
<dbReference type="HOGENOM" id="CLU_095787_0_1_4"/>
<dbReference type="OrthoDB" id="9810350at2"/>
<dbReference type="GO" id="GO:0005886">
    <property type="term" value="C:plasma membrane"/>
    <property type="evidence" value="ECO:0007669"/>
    <property type="project" value="UniProtKB-SubCell"/>
</dbReference>
<dbReference type="GO" id="GO:0008381">
    <property type="term" value="F:mechanosensitive monoatomic ion channel activity"/>
    <property type="evidence" value="ECO:0007669"/>
    <property type="project" value="UniProtKB-UniRule"/>
</dbReference>
<dbReference type="Gene3D" id="1.10.1200.120">
    <property type="entry name" value="Large-conductance mechanosensitive channel, MscL, domain 1"/>
    <property type="match status" value="1"/>
</dbReference>
<dbReference type="HAMAP" id="MF_00115">
    <property type="entry name" value="MscL"/>
    <property type="match status" value="1"/>
</dbReference>
<dbReference type="InterPro" id="IPR001185">
    <property type="entry name" value="MS_channel"/>
</dbReference>
<dbReference type="InterPro" id="IPR037673">
    <property type="entry name" value="MSC/AndL"/>
</dbReference>
<dbReference type="InterPro" id="IPR036019">
    <property type="entry name" value="MscL_channel"/>
</dbReference>
<dbReference type="NCBIfam" id="TIGR00220">
    <property type="entry name" value="mscL"/>
    <property type="match status" value="1"/>
</dbReference>
<dbReference type="NCBIfam" id="NF001843">
    <property type="entry name" value="PRK00567.1-4"/>
    <property type="match status" value="1"/>
</dbReference>
<dbReference type="NCBIfam" id="NF010557">
    <property type="entry name" value="PRK13952.1"/>
    <property type="match status" value="1"/>
</dbReference>
<dbReference type="PANTHER" id="PTHR30266:SF2">
    <property type="entry name" value="LARGE-CONDUCTANCE MECHANOSENSITIVE CHANNEL"/>
    <property type="match status" value="1"/>
</dbReference>
<dbReference type="PANTHER" id="PTHR30266">
    <property type="entry name" value="MECHANOSENSITIVE CHANNEL MSCL"/>
    <property type="match status" value="1"/>
</dbReference>
<dbReference type="Pfam" id="PF01741">
    <property type="entry name" value="MscL"/>
    <property type="match status" value="1"/>
</dbReference>
<dbReference type="PRINTS" id="PR01264">
    <property type="entry name" value="MECHCHANNEL"/>
</dbReference>
<dbReference type="SUPFAM" id="SSF81330">
    <property type="entry name" value="Gated mechanosensitive channel"/>
    <property type="match status" value="1"/>
</dbReference>
<evidence type="ECO:0000255" key="1">
    <source>
        <dbReference type="HAMAP-Rule" id="MF_00115"/>
    </source>
</evidence>
<proteinExistence type="inferred from homology"/>
<comment type="function">
    <text evidence="1">Channel that opens in response to stretch forces in the membrane lipid bilayer. May participate in the regulation of osmotic pressure changes within the cell.</text>
</comment>
<comment type="subunit">
    <text evidence="1">Homopentamer.</text>
</comment>
<comment type="subcellular location">
    <subcellularLocation>
        <location evidence="1">Cell inner membrane</location>
        <topology evidence="1">Multi-pass membrane protein</topology>
    </subcellularLocation>
</comment>
<comment type="similarity">
    <text evidence="1">Belongs to the MscL family.</text>
</comment>
<feature type="chain" id="PRO_0000237996" description="Large-conductance mechanosensitive channel">
    <location>
        <begin position="1"/>
        <end position="141"/>
    </location>
</feature>
<feature type="transmembrane region" description="Helical" evidence="1">
    <location>
        <begin position="21"/>
        <end position="41"/>
    </location>
</feature>
<feature type="transmembrane region" description="Helical" evidence="1">
    <location>
        <begin position="85"/>
        <end position="105"/>
    </location>
</feature>